<keyword id="KW-0966">Cell projection</keyword>
<keyword id="KW-1186">Ciliopathy</keyword>
<keyword id="KW-0969">Cilium</keyword>
<keyword id="KW-0970">Cilium biogenesis/degradation</keyword>
<keyword id="KW-0963">Cytoplasm</keyword>
<keyword id="KW-0206">Cytoskeleton</keyword>
<keyword id="KW-0488">Methylation</keyword>
<keyword id="KW-0597">Phosphoprotein</keyword>
<keyword id="KW-0653">Protein transport</keyword>
<keyword id="KW-1185">Reference proteome</keyword>
<keyword id="KW-0813">Transport</keyword>
<dbReference type="EMBL" id="DAAA02011518">
    <property type="status" value="NOT_ANNOTATED_CDS"/>
    <property type="molecule type" value="Genomic_DNA"/>
</dbReference>
<dbReference type="EMBL" id="DAAA02011519">
    <property type="status" value="NOT_ANNOTATED_CDS"/>
    <property type="molecule type" value="Genomic_DNA"/>
</dbReference>
<dbReference type="RefSeq" id="NP_001179050.1">
    <property type="nucleotide sequence ID" value="NM_001192121.1"/>
</dbReference>
<dbReference type="SMR" id="F1MUG2"/>
<dbReference type="FunCoup" id="F1MUG2">
    <property type="interactions" value="2331"/>
</dbReference>
<dbReference type="STRING" id="9913.ENSBTAP00000009747"/>
<dbReference type="PaxDb" id="9913-ENSBTAP00000009747"/>
<dbReference type="GeneID" id="506914"/>
<dbReference type="KEGG" id="bta:506914"/>
<dbReference type="CTD" id="95681"/>
<dbReference type="VEuPathDB" id="HostDB:ENSBTAG00000007413"/>
<dbReference type="eggNOG" id="ENOG502QR8A">
    <property type="taxonomic scope" value="Eukaryota"/>
</dbReference>
<dbReference type="HOGENOM" id="CLU_064316_0_0_1"/>
<dbReference type="InParanoid" id="F1MUG2"/>
<dbReference type="OMA" id="TMCQRGF"/>
<dbReference type="OrthoDB" id="70250at2759"/>
<dbReference type="TreeFam" id="TF324682"/>
<dbReference type="Reactome" id="R-BTA-2565942">
    <property type="pathway name" value="Regulation of PLK1 Activity at G2/M Transition"/>
</dbReference>
<dbReference type="Reactome" id="R-BTA-380259">
    <property type="pathway name" value="Loss of Nlp from mitotic centrosomes"/>
</dbReference>
<dbReference type="Reactome" id="R-BTA-380270">
    <property type="pathway name" value="Recruitment of mitotic centrosome proteins and complexes"/>
</dbReference>
<dbReference type="Reactome" id="R-BTA-380284">
    <property type="pathway name" value="Loss of proteins required for interphase microtubule organization from the centrosome"/>
</dbReference>
<dbReference type="Reactome" id="R-BTA-380320">
    <property type="pathway name" value="Recruitment of NuMA to mitotic centrosomes"/>
</dbReference>
<dbReference type="Reactome" id="R-BTA-5620912">
    <property type="pathway name" value="Anchoring of the basal body to the plasma membrane"/>
</dbReference>
<dbReference type="Reactome" id="R-BTA-8854518">
    <property type="pathway name" value="AURKA Activation by TPX2"/>
</dbReference>
<dbReference type="Proteomes" id="UP000009136">
    <property type="component" value="Chromosome 4"/>
</dbReference>
<dbReference type="Bgee" id="ENSBTAG00000007413">
    <property type="expression patterns" value="Expressed in spermatid and 107 other cell types or tissues"/>
</dbReference>
<dbReference type="GO" id="GO:0005814">
    <property type="term" value="C:centriole"/>
    <property type="evidence" value="ECO:0000250"/>
    <property type="project" value="UniProtKB"/>
</dbReference>
<dbReference type="GO" id="GO:0005813">
    <property type="term" value="C:centrosome"/>
    <property type="evidence" value="ECO:0007669"/>
    <property type="project" value="UniProtKB-SubCell"/>
</dbReference>
<dbReference type="GO" id="GO:0036064">
    <property type="term" value="C:ciliary basal body"/>
    <property type="evidence" value="ECO:0000250"/>
    <property type="project" value="UniProtKB"/>
</dbReference>
<dbReference type="GO" id="GO:0005929">
    <property type="term" value="C:cilium"/>
    <property type="evidence" value="ECO:0000250"/>
    <property type="project" value="UniProtKB"/>
</dbReference>
<dbReference type="GO" id="GO:0005737">
    <property type="term" value="C:cytoplasm"/>
    <property type="evidence" value="ECO:0007669"/>
    <property type="project" value="UniProtKB-KW"/>
</dbReference>
<dbReference type="GO" id="GO:0060271">
    <property type="term" value="P:cilium assembly"/>
    <property type="evidence" value="ECO:0000250"/>
    <property type="project" value="UniProtKB"/>
</dbReference>
<dbReference type="GO" id="GO:0018095">
    <property type="term" value="P:protein polyglutamylation"/>
    <property type="evidence" value="ECO:0000250"/>
    <property type="project" value="UniProtKB"/>
</dbReference>
<dbReference type="GO" id="GO:0015031">
    <property type="term" value="P:protein transport"/>
    <property type="evidence" value="ECO:0007669"/>
    <property type="project" value="UniProtKB-KW"/>
</dbReference>
<dbReference type="CDD" id="cd00158">
    <property type="entry name" value="RHOD"/>
    <property type="match status" value="1"/>
</dbReference>
<dbReference type="FunFam" id="3.40.250.10:FF:000012">
    <property type="entry name" value="Centrosomal protein of 41 kDa"/>
    <property type="match status" value="1"/>
</dbReference>
<dbReference type="Gene3D" id="3.40.250.10">
    <property type="entry name" value="Rhodanese-like domain"/>
    <property type="match status" value="1"/>
</dbReference>
<dbReference type="InterPro" id="IPR051889">
    <property type="entry name" value="CEP41"/>
</dbReference>
<dbReference type="InterPro" id="IPR001763">
    <property type="entry name" value="Rhodanese-like_dom"/>
</dbReference>
<dbReference type="InterPro" id="IPR036873">
    <property type="entry name" value="Rhodanese-like_dom_sf"/>
</dbReference>
<dbReference type="PANTHER" id="PTHR44390">
    <property type="entry name" value="CENTROSOMAL PROTEIN OF 41 KDA"/>
    <property type="match status" value="1"/>
</dbReference>
<dbReference type="PANTHER" id="PTHR44390:SF1">
    <property type="entry name" value="CENTROSOMAL PROTEIN OF 41 KDA"/>
    <property type="match status" value="1"/>
</dbReference>
<dbReference type="Pfam" id="PF00581">
    <property type="entry name" value="Rhodanese"/>
    <property type="match status" value="1"/>
</dbReference>
<dbReference type="SMART" id="SM00450">
    <property type="entry name" value="RHOD"/>
    <property type="match status" value="1"/>
</dbReference>
<dbReference type="SUPFAM" id="SSF52821">
    <property type="entry name" value="Rhodanese/Cell cycle control phosphatase"/>
    <property type="match status" value="1"/>
</dbReference>
<dbReference type="PROSITE" id="PS50206">
    <property type="entry name" value="RHODANESE_3"/>
    <property type="match status" value="1"/>
</dbReference>
<sequence>MSVRRHIGNPEYLTRRIPQNPRYQHVKSRLDTGNSMTKYIEKLEEIKKNYRYKKDELFKRLKVTTFAQLVIQVASLSDQTLEVTAEEIQRLEDNDSATSEPDAEITAKTNGNGSPGEQSPSPVQFINSEGAGDFSRSTLQSVISGVGELDLDKGLVKKTEPNTKDKPYPDCPFLLLDVRDRDSYQQCHIVGAYSYPIATLSRTMNPYSNDILEYKNAHGKIIILYDDDERLASQAATTMCERGFENLFMLSGGLKVLAQKFPEGLITGSLPASCQQALPPGSARKRSSPKVPPLPAENKWRFTPEDLKKIEYYLEEDQGPADNPSRLSQANASGRDAKVPGTRSGQNLPAGGPASHQNPRSLGSGHLQGKPWK</sequence>
<gene>
    <name type="primary">CEP41</name>
</gene>
<feature type="chain" id="PRO_0000416264" description="Centrosomal protein of 41 kDa">
    <location>
        <begin position="1"/>
        <end position="373"/>
    </location>
</feature>
<feature type="domain" description="Rhodanese" evidence="3">
    <location>
        <begin position="169"/>
        <end position="266"/>
    </location>
</feature>
<feature type="region of interest" description="Disordered" evidence="4">
    <location>
        <begin position="89"/>
        <end position="127"/>
    </location>
</feature>
<feature type="region of interest" description="Disordered" evidence="4">
    <location>
        <begin position="275"/>
        <end position="300"/>
    </location>
</feature>
<feature type="region of interest" description="Disordered" evidence="4">
    <location>
        <begin position="315"/>
        <end position="373"/>
    </location>
</feature>
<feature type="compositionally biased region" description="Polar residues" evidence="4">
    <location>
        <begin position="107"/>
        <end position="127"/>
    </location>
</feature>
<feature type="modified residue" description="Phosphoserine" evidence="2">
    <location>
        <position position="96"/>
    </location>
</feature>
<feature type="modified residue" description="Phosphoserine" evidence="2">
    <location>
        <position position="99"/>
    </location>
</feature>
<feature type="modified residue" description="Phosphothreonine" evidence="2">
    <location>
        <position position="109"/>
    </location>
</feature>
<feature type="modified residue" description="Phosphoserine" evidence="2">
    <location>
        <position position="114"/>
    </location>
</feature>
<feature type="modified residue" description="Phosphoserine" evidence="2">
    <location>
        <position position="121"/>
    </location>
</feature>
<feature type="modified residue" description="Omega-N-methylarginine" evidence="2">
    <location>
        <position position="343"/>
    </location>
</feature>
<name>CEP41_BOVIN</name>
<accession>F1MUG2</accession>
<comment type="function">
    <text evidence="1">Required during ciliogenesis for tubulin glutamylation in cilium. Probably acts by participating in the transport of TTLL6, a tubulin polyglutamylase, between the basal body and the cilium (By similarity).</text>
</comment>
<comment type="subunit">
    <text evidence="1">Found in a complex with TTLL6.</text>
</comment>
<comment type="subcellular location">
    <subcellularLocation>
        <location evidence="1">Cytoplasm</location>
        <location evidence="1">Cytoskeleton</location>
        <location evidence="1">Microtubule organizing center</location>
        <location evidence="1">Centrosome</location>
    </subcellularLocation>
    <subcellularLocation>
        <location evidence="1">Cell projection</location>
        <location evidence="1">Cilium</location>
    </subcellularLocation>
    <subcellularLocation>
        <location evidence="1">Cytoplasm</location>
        <location evidence="1">Cytoskeleton</location>
        <location evidence="1">Cilium basal body</location>
    </subcellularLocation>
    <text evidence="1">Localizes mainly to the cilium basal body and in primary cilia.</text>
</comment>
<comment type="similarity">
    <text evidence="5">Belongs to the CEP41 family.</text>
</comment>
<evidence type="ECO:0000250" key="1"/>
<evidence type="ECO:0000250" key="2">
    <source>
        <dbReference type="UniProtKB" id="Q99NF3"/>
    </source>
</evidence>
<evidence type="ECO:0000255" key="3">
    <source>
        <dbReference type="PROSITE-ProRule" id="PRU00173"/>
    </source>
</evidence>
<evidence type="ECO:0000256" key="4">
    <source>
        <dbReference type="SAM" id="MobiDB-lite"/>
    </source>
</evidence>
<evidence type="ECO:0000305" key="5"/>
<organism>
    <name type="scientific">Bos taurus</name>
    <name type="common">Bovine</name>
    <dbReference type="NCBI Taxonomy" id="9913"/>
    <lineage>
        <taxon>Eukaryota</taxon>
        <taxon>Metazoa</taxon>
        <taxon>Chordata</taxon>
        <taxon>Craniata</taxon>
        <taxon>Vertebrata</taxon>
        <taxon>Euteleostomi</taxon>
        <taxon>Mammalia</taxon>
        <taxon>Eutheria</taxon>
        <taxon>Laurasiatheria</taxon>
        <taxon>Artiodactyla</taxon>
        <taxon>Ruminantia</taxon>
        <taxon>Pecora</taxon>
        <taxon>Bovidae</taxon>
        <taxon>Bovinae</taxon>
        <taxon>Bos</taxon>
    </lineage>
</organism>
<protein>
    <recommendedName>
        <fullName>Centrosomal protein of 41 kDa</fullName>
        <shortName>Cep41</shortName>
    </recommendedName>
</protein>
<reference key="1">
    <citation type="journal article" date="2009" name="Genome Biol.">
        <title>A whole-genome assembly of the domestic cow, Bos taurus.</title>
        <authorList>
            <person name="Zimin A.V."/>
            <person name="Delcher A.L."/>
            <person name="Florea L."/>
            <person name="Kelley D.R."/>
            <person name="Schatz M.C."/>
            <person name="Puiu D."/>
            <person name="Hanrahan F."/>
            <person name="Pertea G."/>
            <person name="Van Tassell C.P."/>
            <person name="Sonstegard T.S."/>
            <person name="Marcais G."/>
            <person name="Roberts M."/>
            <person name="Subramanian P."/>
            <person name="Yorke J.A."/>
            <person name="Salzberg S.L."/>
        </authorList>
    </citation>
    <scope>NUCLEOTIDE SEQUENCE [LARGE SCALE GENOMIC DNA]</scope>
    <source>
        <strain>Hereford</strain>
    </source>
</reference>
<proteinExistence type="inferred from homology"/>